<gene>
    <name type="primary">FSHB</name>
</gene>
<organism>
    <name type="scientific">Bubalus bubalis</name>
    <name type="common">Domestic water buffalo</name>
    <dbReference type="NCBI Taxonomy" id="89462"/>
    <lineage>
        <taxon>Eukaryota</taxon>
        <taxon>Metazoa</taxon>
        <taxon>Chordata</taxon>
        <taxon>Craniata</taxon>
        <taxon>Vertebrata</taxon>
        <taxon>Euteleostomi</taxon>
        <taxon>Mammalia</taxon>
        <taxon>Eutheria</taxon>
        <taxon>Laurasiatheria</taxon>
        <taxon>Artiodactyla</taxon>
        <taxon>Ruminantia</taxon>
        <taxon>Pecora</taxon>
        <taxon>Bovidae</taxon>
        <taxon>Bovinae</taxon>
        <taxon>Bubalus</taxon>
    </lineage>
</organism>
<evidence type="ECO:0000250" key="1"/>
<evidence type="ECO:0000250" key="2">
    <source>
        <dbReference type="UniProtKB" id="P01225"/>
    </source>
</evidence>
<evidence type="ECO:0000305" key="3"/>
<accession>Q6SV86</accession>
<accession>Q0Q0G4</accession>
<proteinExistence type="evidence at transcript level"/>
<protein>
    <recommendedName>
        <fullName>Follitropin subunit beta</fullName>
    </recommendedName>
    <alternativeName>
        <fullName>Follicle-stimulating hormone beta subunit</fullName>
        <shortName>FSH-B</shortName>
        <shortName>FSH-beta</shortName>
    </alternativeName>
    <alternativeName>
        <fullName>Follitropin beta chain</fullName>
    </alternativeName>
</protein>
<reference key="1">
    <citation type="submission" date="2003-10" db="EMBL/GenBank/DDBJ databases">
        <title>Sequence analysis of the water buffalo follicle stimulating hormone-beta subunit gene.</title>
        <authorList>
            <person name="Wang A."/>
            <person name="Shi D."/>
            <person name="Li N."/>
        </authorList>
    </citation>
    <scope>NUCLEOTIDE SEQUENCE [GENOMIC DNA]</scope>
</reference>
<reference key="2">
    <citation type="submission" date="2006-05" db="EMBL/GenBank/DDBJ databases">
        <authorList>
            <person name="Yadav S.P."/>
            <person name="Goswami S.L."/>
            <person name="De S."/>
            <person name="Datta T.K."/>
            <person name="Yadav P."/>
            <person name="Raghvan S."/>
            <person name="Singh R."/>
        </authorList>
    </citation>
    <scope>NUCLEOTIDE SEQUENCE [MRNA]</scope>
</reference>
<name>FSHB_BUBBU</name>
<dbReference type="EMBL" id="AY449463">
    <property type="protein sequence ID" value="AAR13163.1"/>
    <property type="molecule type" value="Genomic_DNA"/>
</dbReference>
<dbReference type="EMBL" id="DQ666186">
    <property type="protein sequence ID" value="ABG57183.1"/>
    <property type="molecule type" value="mRNA"/>
</dbReference>
<dbReference type="RefSeq" id="NP_001277871.1">
    <property type="nucleotide sequence ID" value="NM_001290942.1"/>
</dbReference>
<dbReference type="SMR" id="Q6SV86"/>
<dbReference type="GlyCosmos" id="Q6SV86">
    <property type="glycosylation" value="2 sites, No reported glycans"/>
</dbReference>
<dbReference type="GeneID" id="102406062"/>
<dbReference type="CTD" id="2488"/>
<dbReference type="OrthoDB" id="8453657at2759"/>
<dbReference type="GO" id="GO:0005737">
    <property type="term" value="C:cytoplasm"/>
    <property type="evidence" value="ECO:0007669"/>
    <property type="project" value="TreeGrafter"/>
</dbReference>
<dbReference type="GO" id="GO:0005615">
    <property type="term" value="C:extracellular space"/>
    <property type="evidence" value="ECO:0000250"/>
    <property type="project" value="UniProtKB"/>
</dbReference>
<dbReference type="GO" id="GO:0016914">
    <property type="term" value="C:follicle-stimulating hormone complex"/>
    <property type="evidence" value="ECO:0000250"/>
    <property type="project" value="UniProtKB"/>
</dbReference>
<dbReference type="GO" id="GO:0016913">
    <property type="term" value="F:follicle-stimulating hormone activity"/>
    <property type="evidence" value="ECO:0000250"/>
    <property type="project" value="UniProtKB"/>
</dbReference>
<dbReference type="GO" id="GO:0042699">
    <property type="term" value="P:follicle-stimulating hormone signaling pathway"/>
    <property type="evidence" value="ECO:0007669"/>
    <property type="project" value="TreeGrafter"/>
</dbReference>
<dbReference type="GO" id="GO:0007186">
    <property type="term" value="P:G protein-coupled receptor signaling pathway"/>
    <property type="evidence" value="ECO:0000250"/>
    <property type="project" value="UniProtKB"/>
</dbReference>
<dbReference type="GO" id="GO:0010469">
    <property type="term" value="P:regulation of signaling receptor activity"/>
    <property type="evidence" value="ECO:0000250"/>
    <property type="project" value="UniProtKB"/>
</dbReference>
<dbReference type="CDD" id="cd00069">
    <property type="entry name" value="GHB_like"/>
    <property type="match status" value="1"/>
</dbReference>
<dbReference type="FunFam" id="2.10.90.10:FF:000007">
    <property type="entry name" value="Luteinizing hormone beta subunit"/>
    <property type="match status" value="1"/>
</dbReference>
<dbReference type="Gene3D" id="2.10.90.10">
    <property type="entry name" value="Cystine-knot cytokines"/>
    <property type="match status" value="1"/>
</dbReference>
<dbReference type="InterPro" id="IPR029034">
    <property type="entry name" value="Cystine-knot_cytokine"/>
</dbReference>
<dbReference type="InterPro" id="IPR006208">
    <property type="entry name" value="Glyco_hormone_CN"/>
</dbReference>
<dbReference type="InterPro" id="IPR001545">
    <property type="entry name" value="Gonadotropin_bsu"/>
</dbReference>
<dbReference type="InterPro" id="IPR018245">
    <property type="entry name" value="Gonadotropin_bsu_CS"/>
</dbReference>
<dbReference type="PANTHER" id="PTHR11515:SF17">
    <property type="entry name" value="FOLLITROPIN SUBUNIT BETA"/>
    <property type="match status" value="1"/>
</dbReference>
<dbReference type="PANTHER" id="PTHR11515">
    <property type="entry name" value="GLYCOPROTEIN HORMONE BETA CHAIN"/>
    <property type="match status" value="1"/>
</dbReference>
<dbReference type="Pfam" id="PF00007">
    <property type="entry name" value="Cys_knot"/>
    <property type="match status" value="1"/>
</dbReference>
<dbReference type="SMART" id="SM00068">
    <property type="entry name" value="GHB"/>
    <property type="match status" value="1"/>
</dbReference>
<dbReference type="SUPFAM" id="SSF57501">
    <property type="entry name" value="Cystine-knot cytokines"/>
    <property type="match status" value="1"/>
</dbReference>
<dbReference type="PROSITE" id="PS00261">
    <property type="entry name" value="GLYCO_HORMONE_BETA_1"/>
    <property type="match status" value="1"/>
</dbReference>
<dbReference type="PROSITE" id="PS00689">
    <property type="entry name" value="GLYCO_HORMONE_BETA_2"/>
    <property type="match status" value="1"/>
</dbReference>
<feature type="signal peptide" evidence="1">
    <location>
        <begin position="1"/>
        <end position="20"/>
    </location>
</feature>
<feature type="chain" id="PRO_0000042050" description="Follitropin subunit beta">
    <location>
        <begin position="21"/>
        <end position="129"/>
    </location>
</feature>
<feature type="glycosylation site" description="N-linked (GlcNAc...) asparagine" evidence="2">
    <location>
        <position position="25"/>
    </location>
</feature>
<feature type="glycosylation site" description="N-linked (GlcNAc...) asparagine" evidence="2">
    <location>
        <position position="42"/>
    </location>
</feature>
<feature type="disulfide bond" evidence="2">
    <location>
        <begin position="21"/>
        <end position="69"/>
    </location>
</feature>
<feature type="disulfide bond" evidence="2">
    <location>
        <begin position="35"/>
        <end position="84"/>
    </location>
</feature>
<feature type="disulfide bond" evidence="2">
    <location>
        <begin position="38"/>
        <end position="122"/>
    </location>
</feature>
<feature type="disulfide bond" evidence="2">
    <location>
        <begin position="46"/>
        <end position="100"/>
    </location>
</feature>
<feature type="disulfide bond" evidence="2">
    <location>
        <begin position="50"/>
        <end position="102"/>
    </location>
</feature>
<feature type="disulfide bond" evidence="2">
    <location>
        <begin position="105"/>
        <end position="112"/>
    </location>
</feature>
<keyword id="KW-1015">Disulfide bond</keyword>
<keyword id="KW-0325">Glycoprotein</keyword>
<keyword id="KW-0372">Hormone</keyword>
<keyword id="KW-0964">Secreted</keyword>
<keyword id="KW-0732">Signal</keyword>
<comment type="function">
    <text evidence="2">Together with the alpha chain CGA constitutes follitropin, the follicle-stimulating hormone, and provides its biological specificity to the hormone heterodimer. Binds FSHR, a G protein-coupled receptor, on target cells to activate downstream signaling pathways. Follitropin is involved in follicle development and spermatogenesis in reproductive organs.</text>
</comment>
<comment type="subunit">
    <text evidence="2">Heterodimer. The active follitropin is a heterodimer composed of an alpha chain/CGA shared with other hormones and a unique beta chain/FSHB shown here.</text>
</comment>
<comment type="subcellular location">
    <subcellularLocation>
        <location evidence="2">Secreted</location>
    </subcellularLocation>
    <text evidence="2">Efficient secretion requires dimerization with CGA.</text>
</comment>
<comment type="similarity">
    <text evidence="3">Belongs to the glycoprotein hormones subunit beta family.</text>
</comment>
<sequence length="129" mass="14593">MKSVQFCFLFCCWRAICCRSCELTNITITVEKEECGFCISINTTWCAGYCYTRDLVYRDPARPNIQKTCTYKELVYETVKVPGCAHHADSLYTYPVATECQCGKCDGDSTDCTVRGLGPSYCSFSESRE</sequence>